<keyword id="KW-0687">Ribonucleoprotein</keyword>
<keyword id="KW-0689">Ribosomal protein</keyword>
<keyword id="KW-0694">RNA-binding</keyword>
<keyword id="KW-0699">rRNA-binding</keyword>
<accession>C1CP97</accession>
<sequence length="86" mass="10011">MERNNRKVLVGRVVSDKMDKTITVVVETKRNHPVYGKRINYSKKYKAHDENNVAKEGDIVRIMETRPLSATKRFRLVEVVEEAVII</sequence>
<feature type="chain" id="PRO_1000166503" description="Small ribosomal subunit protein uS17">
    <location>
        <begin position="1"/>
        <end position="86"/>
    </location>
</feature>
<organism>
    <name type="scientific">Streptococcus pneumoniae (strain Taiwan19F-14)</name>
    <dbReference type="NCBI Taxonomy" id="487213"/>
    <lineage>
        <taxon>Bacteria</taxon>
        <taxon>Bacillati</taxon>
        <taxon>Bacillota</taxon>
        <taxon>Bacilli</taxon>
        <taxon>Lactobacillales</taxon>
        <taxon>Streptococcaceae</taxon>
        <taxon>Streptococcus</taxon>
    </lineage>
</organism>
<reference key="1">
    <citation type="journal article" date="2010" name="Genome Biol.">
        <title>Structure and dynamics of the pan-genome of Streptococcus pneumoniae and closely related species.</title>
        <authorList>
            <person name="Donati C."/>
            <person name="Hiller N.L."/>
            <person name="Tettelin H."/>
            <person name="Muzzi A."/>
            <person name="Croucher N.J."/>
            <person name="Angiuoli S.V."/>
            <person name="Oggioni M."/>
            <person name="Dunning Hotopp J.C."/>
            <person name="Hu F.Z."/>
            <person name="Riley D.R."/>
            <person name="Covacci A."/>
            <person name="Mitchell T.J."/>
            <person name="Bentley S.D."/>
            <person name="Kilian M."/>
            <person name="Ehrlich G.D."/>
            <person name="Rappuoli R."/>
            <person name="Moxon E.R."/>
            <person name="Masignani V."/>
        </authorList>
    </citation>
    <scope>NUCLEOTIDE SEQUENCE [LARGE SCALE GENOMIC DNA]</scope>
    <source>
        <strain>Taiwan19F-14</strain>
    </source>
</reference>
<comment type="function">
    <text evidence="1">One of the primary rRNA binding proteins, it binds specifically to the 5'-end of 16S ribosomal RNA.</text>
</comment>
<comment type="subunit">
    <text evidence="1">Part of the 30S ribosomal subunit.</text>
</comment>
<comment type="similarity">
    <text evidence="1">Belongs to the universal ribosomal protein uS17 family.</text>
</comment>
<proteinExistence type="inferred from homology"/>
<evidence type="ECO:0000255" key="1">
    <source>
        <dbReference type="HAMAP-Rule" id="MF_01345"/>
    </source>
</evidence>
<evidence type="ECO:0000305" key="2"/>
<name>RS17_STRZT</name>
<protein>
    <recommendedName>
        <fullName evidence="1">Small ribosomal subunit protein uS17</fullName>
    </recommendedName>
    <alternativeName>
        <fullName evidence="2">30S ribosomal protein S17</fullName>
    </alternativeName>
</protein>
<gene>
    <name evidence="1" type="primary">rpsQ</name>
    <name type="ordered locus">SPT_0265</name>
</gene>
<dbReference type="EMBL" id="CP000921">
    <property type="protein sequence ID" value="ACO24097.1"/>
    <property type="molecule type" value="Genomic_DNA"/>
</dbReference>
<dbReference type="RefSeq" id="WP_000440801.1">
    <property type="nucleotide sequence ID" value="NC_012469.1"/>
</dbReference>
<dbReference type="SMR" id="C1CP97"/>
<dbReference type="GeneID" id="93920913"/>
<dbReference type="KEGG" id="snt:SPT_0265"/>
<dbReference type="HOGENOM" id="CLU_073626_1_0_9"/>
<dbReference type="GO" id="GO:0022627">
    <property type="term" value="C:cytosolic small ribosomal subunit"/>
    <property type="evidence" value="ECO:0007669"/>
    <property type="project" value="TreeGrafter"/>
</dbReference>
<dbReference type="GO" id="GO:0019843">
    <property type="term" value="F:rRNA binding"/>
    <property type="evidence" value="ECO:0007669"/>
    <property type="project" value="UniProtKB-UniRule"/>
</dbReference>
<dbReference type="GO" id="GO:0003735">
    <property type="term" value="F:structural constituent of ribosome"/>
    <property type="evidence" value="ECO:0007669"/>
    <property type="project" value="InterPro"/>
</dbReference>
<dbReference type="GO" id="GO:0006412">
    <property type="term" value="P:translation"/>
    <property type="evidence" value="ECO:0007669"/>
    <property type="project" value="UniProtKB-UniRule"/>
</dbReference>
<dbReference type="CDD" id="cd00364">
    <property type="entry name" value="Ribosomal_uS17"/>
    <property type="match status" value="1"/>
</dbReference>
<dbReference type="FunFam" id="2.40.50.140:FF:000026">
    <property type="entry name" value="30S ribosomal protein S17"/>
    <property type="match status" value="1"/>
</dbReference>
<dbReference type="Gene3D" id="2.40.50.140">
    <property type="entry name" value="Nucleic acid-binding proteins"/>
    <property type="match status" value="1"/>
</dbReference>
<dbReference type="HAMAP" id="MF_01345_B">
    <property type="entry name" value="Ribosomal_uS17_B"/>
    <property type="match status" value="1"/>
</dbReference>
<dbReference type="InterPro" id="IPR012340">
    <property type="entry name" value="NA-bd_OB-fold"/>
</dbReference>
<dbReference type="InterPro" id="IPR000266">
    <property type="entry name" value="Ribosomal_uS17"/>
</dbReference>
<dbReference type="InterPro" id="IPR019984">
    <property type="entry name" value="Ribosomal_uS17_bact/chlr"/>
</dbReference>
<dbReference type="InterPro" id="IPR019979">
    <property type="entry name" value="Ribosomal_uS17_CS"/>
</dbReference>
<dbReference type="NCBIfam" id="NF004123">
    <property type="entry name" value="PRK05610.1"/>
    <property type="match status" value="1"/>
</dbReference>
<dbReference type="NCBIfam" id="TIGR03635">
    <property type="entry name" value="uS17_bact"/>
    <property type="match status" value="1"/>
</dbReference>
<dbReference type="PANTHER" id="PTHR10744">
    <property type="entry name" value="40S RIBOSOMAL PROTEIN S11 FAMILY MEMBER"/>
    <property type="match status" value="1"/>
</dbReference>
<dbReference type="PANTHER" id="PTHR10744:SF1">
    <property type="entry name" value="SMALL RIBOSOMAL SUBUNIT PROTEIN US17M"/>
    <property type="match status" value="1"/>
</dbReference>
<dbReference type="Pfam" id="PF00366">
    <property type="entry name" value="Ribosomal_S17"/>
    <property type="match status" value="1"/>
</dbReference>
<dbReference type="PRINTS" id="PR00973">
    <property type="entry name" value="RIBOSOMALS17"/>
</dbReference>
<dbReference type="SUPFAM" id="SSF50249">
    <property type="entry name" value="Nucleic acid-binding proteins"/>
    <property type="match status" value="1"/>
</dbReference>
<dbReference type="PROSITE" id="PS00056">
    <property type="entry name" value="RIBOSOMAL_S17"/>
    <property type="match status" value="1"/>
</dbReference>